<accession>Q9CN39</accession>
<dbReference type="EC" id="2.8.1.-" evidence="1"/>
<dbReference type="EMBL" id="AE004439">
    <property type="protein sequence ID" value="AAK02690.1"/>
    <property type="molecule type" value="Genomic_DNA"/>
</dbReference>
<dbReference type="SMR" id="Q9CN39"/>
<dbReference type="STRING" id="272843.PM0606"/>
<dbReference type="EnsemblBacteria" id="AAK02690">
    <property type="protein sequence ID" value="AAK02690"/>
    <property type="gene ID" value="PM0606"/>
</dbReference>
<dbReference type="KEGG" id="pmu:PM0606"/>
<dbReference type="HOGENOM" id="CLU_026481_0_0_6"/>
<dbReference type="Proteomes" id="UP000000809">
    <property type="component" value="Chromosome"/>
</dbReference>
<dbReference type="GO" id="GO:0005737">
    <property type="term" value="C:cytoplasm"/>
    <property type="evidence" value="ECO:0007669"/>
    <property type="project" value="UniProtKB-SubCell"/>
</dbReference>
<dbReference type="GO" id="GO:0051539">
    <property type="term" value="F:4 iron, 4 sulfur cluster binding"/>
    <property type="evidence" value="ECO:0007669"/>
    <property type="project" value="UniProtKB-UniRule"/>
</dbReference>
<dbReference type="GO" id="GO:0005524">
    <property type="term" value="F:ATP binding"/>
    <property type="evidence" value="ECO:0007669"/>
    <property type="project" value="UniProtKB-UniRule"/>
</dbReference>
<dbReference type="GO" id="GO:0000287">
    <property type="term" value="F:magnesium ion binding"/>
    <property type="evidence" value="ECO:0007669"/>
    <property type="project" value="UniProtKB-UniRule"/>
</dbReference>
<dbReference type="GO" id="GO:0016783">
    <property type="term" value="F:sulfurtransferase activity"/>
    <property type="evidence" value="ECO:0007669"/>
    <property type="project" value="UniProtKB-UniRule"/>
</dbReference>
<dbReference type="GO" id="GO:0000049">
    <property type="term" value="F:tRNA binding"/>
    <property type="evidence" value="ECO:0007669"/>
    <property type="project" value="UniProtKB-KW"/>
</dbReference>
<dbReference type="GO" id="GO:0034227">
    <property type="term" value="P:tRNA thio-modification"/>
    <property type="evidence" value="ECO:0007669"/>
    <property type="project" value="UniProtKB-UniRule"/>
</dbReference>
<dbReference type="CDD" id="cd24138">
    <property type="entry name" value="TtcA-like"/>
    <property type="match status" value="1"/>
</dbReference>
<dbReference type="Gene3D" id="3.40.50.620">
    <property type="entry name" value="HUPs"/>
    <property type="match status" value="1"/>
</dbReference>
<dbReference type="HAMAP" id="MF_01850">
    <property type="entry name" value="TtcA"/>
    <property type="match status" value="1"/>
</dbReference>
<dbReference type="InterPro" id="IPR014729">
    <property type="entry name" value="Rossmann-like_a/b/a_fold"/>
</dbReference>
<dbReference type="InterPro" id="IPR011063">
    <property type="entry name" value="TilS/TtcA_N"/>
</dbReference>
<dbReference type="InterPro" id="IPR012089">
    <property type="entry name" value="tRNA_Cyd_32_2_STrfase"/>
</dbReference>
<dbReference type="InterPro" id="IPR035107">
    <property type="entry name" value="tRNA_thiolation_TtcA_Ctu1"/>
</dbReference>
<dbReference type="NCBIfam" id="NF007972">
    <property type="entry name" value="PRK10696.1"/>
    <property type="match status" value="1"/>
</dbReference>
<dbReference type="PANTHER" id="PTHR43686:SF1">
    <property type="entry name" value="AMINOTRAN_5 DOMAIN-CONTAINING PROTEIN"/>
    <property type="match status" value="1"/>
</dbReference>
<dbReference type="PANTHER" id="PTHR43686">
    <property type="entry name" value="SULFURTRANSFERASE-RELATED"/>
    <property type="match status" value="1"/>
</dbReference>
<dbReference type="Pfam" id="PF01171">
    <property type="entry name" value="ATP_bind_3"/>
    <property type="match status" value="1"/>
</dbReference>
<dbReference type="PIRSF" id="PIRSF004976">
    <property type="entry name" value="ATPase_YdaO"/>
    <property type="match status" value="1"/>
</dbReference>
<dbReference type="SUPFAM" id="SSF52402">
    <property type="entry name" value="Adenine nucleotide alpha hydrolases-like"/>
    <property type="match status" value="1"/>
</dbReference>
<name>TTCA_PASMU</name>
<keyword id="KW-0004">4Fe-4S</keyword>
<keyword id="KW-0067">ATP-binding</keyword>
<keyword id="KW-0963">Cytoplasm</keyword>
<keyword id="KW-0408">Iron</keyword>
<keyword id="KW-0411">Iron-sulfur</keyword>
<keyword id="KW-0460">Magnesium</keyword>
<keyword id="KW-0479">Metal-binding</keyword>
<keyword id="KW-0547">Nucleotide-binding</keyword>
<keyword id="KW-1185">Reference proteome</keyword>
<keyword id="KW-0694">RNA-binding</keyword>
<keyword id="KW-0808">Transferase</keyword>
<keyword id="KW-0819">tRNA processing</keyword>
<keyword id="KW-0820">tRNA-binding</keyword>
<reference key="1">
    <citation type="journal article" date="2001" name="Proc. Natl. Acad. Sci. U.S.A.">
        <title>Complete genomic sequence of Pasteurella multocida Pm70.</title>
        <authorList>
            <person name="May B.J."/>
            <person name="Zhang Q."/>
            <person name="Li L.L."/>
            <person name="Paustian M.L."/>
            <person name="Whittam T.S."/>
            <person name="Kapur V."/>
        </authorList>
    </citation>
    <scope>NUCLEOTIDE SEQUENCE [LARGE SCALE GENOMIC DNA]</scope>
    <source>
        <strain>Pm70</strain>
    </source>
</reference>
<sequence>MTMTDTTQQDKKHTYNFNKLQKRLRRNVGNAIADFNMIEEGDKVMVCLSGGKDSYTLLDILLNLRLNAPIHFEIVAVNLDQKQPGFPEHILPEYLQSIGVDYKIVEENTYGIVKEKIPEGKTTCSLCSRLRRGILYRTATELGATKIALGHHRDDMLETLFLNMFYGGKLKSMPPKLISDDGKQIVIRPLAYCKEKDIEKYAQAKHFPIIPCNLCGSQPNLQRQVVKEMLQKWDRQYPGRIETMFSAIQNIVPSHLCDTHLFNFKDLQRGQILENIEGDIAFDKPEFIATSPIDDDDEQQDFHQVELINVKEIH</sequence>
<feature type="chain" id="PRO_0000348781" description="tRNA-cytidine(32) 2-sulfurtransferase">
    <location>
        <begin position="1"/>
        <end position="314"/>
    </location>
</feature>
<feature type="short sequence motif" description="PP-loop motif" evidence="1">
    <location>
        <begin position="49"/>
        <end position="54"/>
    </location>
</feature>
<feature type="binding site" evidence="1">
    <location>
        <position position="124"/>
    </location>
    <ligand>
        <name>[4Fe-4S] cluster</name>
        <dbReference type="ChEBI" id="CHEBI:49883"/>
    </ligand>
</feature>
<feature type="binding site" evidence="1">
    <location>
        <position position="127"/>
    </location>
    <ligand>
        <name>[4Fe-4S] cluster</name>
        <dbReference type="ChEBI" id="CHEBI:49883"/>
    </ligand>
</feature>
<feature type="binding site" evidence="1">
    <location>
        <position position="215"/>
    </location>
    <ligand>
        <name>[4Fe-4S] cluster</name>
        <dbReference type="ChEBI" id="CHEBI:49883"/>
    </ligand>
</feature>
<evidence type="ECO:0000255" key="1">
    <source>
        <dbReference type="HAMAP-Rule" id="MF_01850"/>
    </source>
</evidence>
<organism>
    <name type="scientific">Pasteurella multocida (strain Pm70)</name>
    <dbReference type="NCBI Taxonomy" id="272843"/>
    <lineage>
        <taxon>Bacteria</taxon>
        <taxon>Pseudomonadati</taxon>
        <taxon>Pseudomonadota</taxon>
        <taxon>Gammaproteobacteria</taxon>
        <taxon>Pasteurellales</taxon>
        <taxon>Pasteurellaceae</taxon>
        <taxon>Pasteurella</taxon>
    </lineage>
</organism>
<proteinExistence type="inferred from homology"/>
<protein>
    <recommendedName>
        <fullName evidence="1">tRNA-cytidine(32) 2-sulfurtransferase</fullName>
        <ecNumber evidence="1">2.8.1.-</ecNumber>
    </recommendedName>
    <alternativeName>
        <fullName evidence="1">Two-thiocytidine biosynthesis protein A</fullName>
    </alternativeName>
    <alternativeName>
        <fullName evidence="1">tRNA 2-thiocytidine biosynthesis protein TtcA</fullName>
    </alternativeName>
</protein>
<comment type="function">
    <text evidence="1">Catalyzes the ATP-dependent 2-thiolation of cytidine in position 32 of tRNA, to form 2-thiocytidine (s(2)C32). The sulfur atoms are provided by the cysteine/cysteine desulfurase (IscS) system.</text>
</comment>
<comment type="catalytic activity">
    <reaction evidence="1">
        <text>cytidine(32) in tRNA + S-sulfanyl-L-cysteinyl-[cysteine desulfurase] + AH2 + ATP = 2-thiocytidine(32) in tRNA + L-cysteinyl-[cysteine desulfurase] + A + AMP + diphosphate + H(+)</text>
        <dbReference type="Rhea" id="RHEA:57048"/>
        <dbReference type="Rhea" id="RHEA-COMP:10288"/>
        <dbReference type="Rhea" id="RHEA-COMP:12157"/>
        <dbReference type="Rhea" id="RHEA-COMP:12158"/>
        <dbReference type="Rhea" id="RHEA-COMP:14821"/>
        <dbReference type="ChEBI" id="CHEBI:13193"/>
        <dbReference type="ChEBI" id="CHEBI:15378"/>
        <dbReference type="ChEBI" id="CHEBI:17499"/>
        <dbReference type="ChEBI" id="CHEBI:29950"/>
        <dbReference type="ChEBI" id="CHEBI:30616"/>
        <dbReference type="ChEBI" id="CHEBI:33019"/>
        <dbReference type="ChEBI" id="CHEBI:61963"/>
        <dbReference type="ChEBI" id="CHEBI:82748"/>
        <dbReference type="ChEBI" id="CHEBI:141453"/>
        <dbReference type="ChEBI" id="CHEBI:456215"/>
    </reaction>
    <physiologicalReaction direction="left-to-right" evidence="1">
        <dbReference type="Rhea" id="RHEA:57049"/>
    </physiologicalReaction>
</comment>
<comment type="cofactor">
    <cofactor evidence="1">
        <name>Mg(2+)</name>
        <dbReference type="ChEBI" id="CHEBI:18420"/>
    </cofactor>
</comment>
<comment type="cofactor">
    <cofactor evidence="1">
        <name>[4Fe-4S] cluster</name>
        <dbReference type="ChEBI" id="CHEBI:49883"/>
    </cofactor>
    <text evidence="1">Binds 1 [4Fe-4S] cluster per subunit. The cluster is chelated by three Cys residues, the fourth Fe has a free coordination site that may bind a sulfur atom transferred from the persulfide of IscS.</text>
</comment>
<comment type="pathway">
    <text evidence="1">tRNA modification.</text>
</comment>
<comment type="subunit">
    <text evidence="1">Homodimer.</text>
</comment>
<comment type="subcellular location">
    <subcellularLocation>
        <location evidence="1">Cytoplasm</location>
    </subcellularLocation>
</comment>
<comment type="miscellaneous">
    <text evidence="1">The thiolation reaction likely consists of two steps: a first activation step by ATP to form an adenylated intermediate of the target base of tRNA, and a second nucleophilic substitution step of the sulfur (S) atom supplied by the hydrosulfide attached to the Fe-S cluster.</text>
</comment>
<comment type="similarity">
    <text evidence="1">Belongs to the TtcA family.</text>
</comment>
<gene>
    <name evidence="1" type="primary">ttcA</name>
    <name type="ordered locus">PM0606</name>
</gene>